<accession>P44034</accession>
<gene>
    <name type="ordered locus">HI_0666</name>
</gene>
<proteinExistence type="evidence at protein level"/>
<name>Y666_HAEIN</name>
<evidence type="ECO:0007829" key="1">
    <source>
        <dbReference type="PDB" id="7CZO"/>
    </source>
</evidence>
<protein>
    <recommendedName>
        <fullName>Uncharacterized protein HI_0666</fullName>
    </recommendedName>
</protein>
<organism>
    <name type="scientific">Haemophilus influenzae (strain ATCC 51907 / DSM 11121 / KW20 / Rd)</name>
    <dbReference type="NCBI Taxonomy" id="71421"/>
    <lineage>
        <taxon>Bacteria</taxon>
        <taxon>Pseudomonadati</taxon>
        <taxon>Pseudomonadota</taxon>
        <taxon>Gammaproteobacteria</taxon>
        <taxon>Pasteurellales</taxon>
        <taxon>Pasteurellaceae</taxon>
        <taxon>Haemophilus</taxon>
    </lineage>
</organism>
<dbReference type="EMBL" id="L42023">
    <property type="protein sequence ID" value="AAC22326.1"/>
    <property type="molecule type" value="Genomic_DNA"/>
</dbReference>
<dbReference type="PIR" id="G64011">
    <property type="entry name" value="G64011"/>
</dbReference>
<dbReference type="RefSeq" id="NP_438825.1">
    <property type="nucleotide sequence ID" value="NC_000907.1"/>
</dbReference>
<dbReference type="PDB" id="7CZO">
    <property type="method" value="X-ray"/>
    <property type="resolution" value="2.70 A"/>
    <property type="chains" value="A=1-106"/>
</dbReference>
<dbReference type="PDBsum" id="7CZO"/>
<dbReference type="SMR" id="P44034"/>
<dbReference type="STRING" id="71421.HI_0666"/>
<dbReference type="EnsemblBacteria" id="AAC22326">
    <property type="protein sequence ID" value="AAC22326"/>
    <property type="gene ID" value="HI_0666"/>
</dbReference>
<dbReference type="KEGG" id="hin:HI_0666"/>
<dbReference type="PATRIC" id="fig|71421.8.peg.695"/>
<dbReference type="eggNOG" id="COG3550">
    <property type="taxonomic scope" value="Bacteria"/>
</dbReference>
<dbReference type="HOGENOM" id="CLU_168268_1_0_6"/>
<dbReference type="OrthoDB" id="196808at2"/>
<dbReference type="BioCyc" id="HINF71421:G1GJ1-700-MONOMER"/>
<dbReference type="Proteomes" id="UP000000579">
    <property type="component" value="Chromosome"/>
</dbReference>
<dbReference type="InterPro" id="IPR017508">
    <property type="entry name" value="HipA_N1"/>
</dbReference>
<dbReference type="NCBIfam" id="TIGR03071">
    <property type="entry name" value="couple_hipA"/>
    <property type="match status" value="1"/>
</dbReference>
<dbReference type="Pfam" id="PF13657">
    <property type="entry name" value="Couple_hipA"/>
    <property type="match status" value="1"/>
</dbReference>
<reference key="1">
    <citation type="journal article" date="1995" name="Science">
        <title>Whole-genome random sequencing and assembly of Haemophilus influenzae Rd.</title>
        <authorList>
            <person name="Fleischmann R.D."/>
            <person name="Adams M.D."/>
            <person name="White O."/>
            <person name="Clayton R.A."/>
            <person name="Kirkness E.F."/>
            <person name="Kerlavage A.R."/>
            <person name="Bult C.J."/>
            <person name="Tomb J.-F."/>
            <person name="Dougherty B.A."/>
            <person name="Merrick J.M."/>
            <person name="McKenney K."/>
            <person name="Sutton G.G."/>
            <person name="FitzHugh W."/>
            <person name="Fields C.A."/>
            <person name="Gocayne J.D."/>
            <person name="Scott J.D."/>
            <person name="Shirley R."/>
            <person name="Liu L.-I."/>
            <person name="Glodek A."/>
            <person name="Kelley J.M."/>
            <person name="Weidman J.F."/>
            <person name="Phillips C.A."/>
            <person name="Spriggs T."/>
            <person name="Hedblom E."/>
            <person name="Cotton M.D."/>
            <person name="Utterback T.R."/>
            <person name="Hanna M.C."/>
            <person name="Nguyen D.T."/>
            <person name="Saudek D.M."/>
            <person name="Brandon R.C."/>
            <person name="Fine L.D."/>
            <person name="Fritchman J.L."/>
            <person name="Fuhrmann J.L."/>
            <person name="Geoghagen N.S.M."/>
            <person name="Gnehm C.L."/>
            <person name="McDonald L.A."/>
            <person name="Small K.V."/>
            <person name="Fraser C.M."/>
            <person name="Smith H.O."/>
            <person name="Venter J.C."/>
        </authorList>
    </citation>
    <scope>NUCLEOTIDE SEQUENCE [LARGE SCALE GENOMIC DNA]</scope>
    <source>
        <strain>ATCC 51907 / DSM 11121 / KW20 / Rd</strain>
    </source>
</reference>
<sequence>MRDLVRSGKVFLYGEFIGLLREDHRGFHFSYNPDYQGIPLSLSFPIEQSPFHSDTLFPYFASLVPEGWLKHKYALHQRIDESDMFRFLLNNGENMLGAVQIQEEKQ</sequence>
<keyword id="KW-0002">3D-structure</keyword>
<keyword id="KW-1185">Reference proteome</keyword>
<feature type="chain" id="PRO_0000077943" description="Uncharacterized protein HI_0666">
    <location>
        <begin position="1"/>
        <end position="106"/>
    </location>
</feature>
<feature type="strand" evidence="1">
    <location>
        <begin position="7"/>
        <end position="12"/>
    </location>
</feature>
<feature type="strand" evidence="1">
    <location>
        <begin position="15"/>
        <end position="22"/>
    </location>
</feature>
<feature type="strand" evidence="1">
    <location>
        <begin position="27"/>
        <end position="31"/>
    </location>
</feature>
<feature type="helix" evidence="1">
    <location>
        <begin position="46"/>
        <end position="48"/>
    </location>
</feature>
<feature type="strand" evidence="1">
    <location>
        <begin position="51"/>
        <end position="55"/>
    </location>
</feature>
<feature type="helix" evidence="1">
    <location>
        <begin position="58"/>
        <end position="62"/>
    </location>
</feature>
<feature type="helix" evidence="1">
    <location>
        <begin position="66"/>
        <end position="70"/>
    </location>
</feature>
<feature type="helix" evidence="1">
    <location>
        <begin position="82"/>
        <end position="91"/>
    </location>
</feature>
<feature type="strand" evidence="1">
    <location>
        <begin position="92"/>
        <end position="102"/>
    </location>
</feature>